<dbReference type="EC" id="1.14.14.1" evidence="6"/>
<dbReference type="EMBL" id="AY206873">
    <property type="protein sequence ID" value="AAO52736.1"/>
    <property type="molecule type" value="mRNA"/>
</dbReference>
<dbReference type="EMBL" id="AC148014">
    <property type="status" value="NOT_ANNOTATED_CDS"/>
    <property type="molecule type" value="Genomic_DNA"/>
</dbReference>
<dbReference type="EMBL" id="BC011222">
    <property type="protein sequence ID" value="AAH11222.1"/>
    <property type="molecule type" value="mRNA"/>
</dbReference>
<dbReference type="EMBL" id="BC051050">
    <property type="protein sequence ID" value="AAH51050.1"/>
    <property type="molecule type" value="mRNA"/>
</dbReference>
<dbReference type="CCDS" id="CCDS29801.1">
    <molecule id="Q91X77-1"/>
</dbReference>
<dbReference type="CCDS" id="CCDS50433.1">
    <molecule id="Q91X77-2"/>
</dbReference>
<dbReference type="RefSeq" id="NP_001161347.1">
    <molecule id="Q91X77-2"/>
    <property type="nucleotide sequence ID" value="NM_001167875.1"/>
</dbReference>
<dbReference type="RefSeq" id="NP_598905.2">
    <molecule id="Q91X77-1"/>
    <property type="nucleotide sequence ID" value="NM_134144.2"/>
</dbReference>
<dbReference type="SMR" id="Q91X77"/>
<dbReference type="FunCoup" id="Q91X77">
    <property type="interactions" value="1043"/>
</dbReference>
<dbReference type="STRING" id="10090.ENSMUSP00000079065"/>
<dbReference type="GlyGen" id="Q91X77">
    <property type="glycosylation" value="1 site"/>
</dbReference>
<dbReference type="iPTMnet" id="Q91X77"/>
<dbReference type="PhosphoSitePlus" id="Q91X77"/>
<dbReference type="SwissPalm" id="Q91X77"/>
<dbReference type="jPOST" id="Q91X77"/>
<dbReference type="PaxDb" id="10090-ENSMUSP00000079065"/>
<dbReference type="PeptideAtlas" id="Q91X77"/>
<dbReference type="ProteomicsDB" id="279248">
    <molecule id="Q91X77-1"/>
</dbReference>
<dbReference type="ProteomicsDB" id="279249">
    <molecule id="Q91X77-2"/>
</dbReference>
<dbReference type="DNASU" id="107141"/>
<dbReference type="Ensembl" id="ENSMUST00000068094.13">
    <molecule id="Q91X77-2"/>
    <property type="protein sequence ID" value="ENSMUSP00000068039.7"/>
    <property type="gene ID" value="ENSMUSG00000054827.13"/>
</dbReference>
<dbReference type="Ensembl" id="ENSMUST00000080171.3">
    <molecule id="Q91X77-1"/>
    <property type="protein sequence ID" value="ENSMUSP00000079065.3"/>
    <property type="gene ID" value="ENSMUSG00000054827.13"/>
</dbReference>
<dbReference type="GeneID" id="107141"/>
<dbReference type="KEGG" id="mmu:107141"/>
<dbReference type="UCSC" id="uc008hki.2">
    <molecule id="Q91X77-1"/>
    <property type="organism name" value="mouse"/>
</dbReference>
<dbReference type="UCSC" id="uc012blo.1">
    <molecule id="Q91X77-2"/>
    <property type="organism name" value="mouse"/>
</dbReference>
<dbReference type="AGR" id="MGI:2147497"/>
<dbReference type="CTD" id="107141"/>
<dbReference type="MGI" id="MGI:2147497">
    <property type="gene designation" value="Cyp2c50"/>
</dbReference>
<dbReference type="VEuPathDB" id="HostDB:ENSMUSG00000054827"/>
<dbReference type="eggNOG" id="KOG0156">
    <property type="taxonomic scope" value="Eukaryota"/>
</dbReference>
<dbReference type="GeneTree" id="ENSGT00940000155736"/>
<dbReference type="HOGENOM" id="CLU_001570_22_3_1"/>
<dbReference type="InParanoid" id="Q91X77"/>
<dbReference type="OMA" id="VEECDIK"/>
<dbReference type="OrthoDB" id="1103324at2759"/>
<dbReference type="PhylomeDB" id="Q91X77"/>
<dbReference type="TreeFam" id="TF352043"/>
<dbReference type="BioGRID-ORCS" id="107141">
    <property type="hits" value="0 hits in 46 CRISPR screens"/>
</dbReference>
<dbReference type="PRO" id="PR:Q91X77"/>
<dbReference type="Proteomes" id="UP000000589">
    <property type="component" value="Chromosome 19"/>
</dbReference>
<dbReference type="RNAct" id="Q91X77">
    <property type="molecule type" value="protein"/>
</dbReference>
<dbReference type="Bgee" id="ENSMUSG00000054827">
    <property type="expression patterns" value="Expressed in left lobe of liver and 13 other cell types or tissues"/>
</dbReference>
<dbReference type="GO" id="GO:0005789">
    <property type="term" value="C:endoplasmic reticulum membrane"/>
    <property type="evidence" value="ECO:0007669"/>
    <property type="project" value="UniProtKB-SubCell"/>
</dbReference>
<dbReference type="GO" id="GO:0008392">
    <property type="term" value="F:arachidonate epoxygenase activity"/>
    <property type="evidence" value="ECO:0000314"/>
    <property type="project" value="MGI"/>
</dbReference>
<dbReference type="GO" id="GO:0020037">
    <property type="term" value="F:heme binding"/>
    <property type="evidence" value="ECO:0007669"/>
    <property type="project" value="InterPro"/>
</dbReference>
<dbReference type="GO" id="GO:0005506">
    <property type="term" value="F:iron ion binding"/>
    <property type="evidence" value="ECO:0007669"/>
    <property type="project" value="InterPro"/>
</dbReference>
<dbReference type="GO" id="GO:0071614">
    <property type="term" value="F:linoleic acid epoxygenase activity"/>
    <property type="evidence" value="ECO:0000314"/>
    <property type="project" value="MGI"/>
</dbReference>
<dbReference type="GO" id="GO:0016712">
    <property type="term" value="F:oxidoreductase activity, acting on paired donors, with incorporation or reduction of molecular oxygen, reduced flavin or flavoprotein as one donor, and incorporation of one atom of oxygen"/>
    <property type="evidence" value="ECO:0007669"/>
    <property type="project" value="UniProtKB-EC"/>
</dbReference>
<dbReference type="GO" id="GO:0019369">
    <property type="term" value="P:arachidonate metabolic process"/>
    <property type="evidence" value="ECO:0000314"/>
    <property type="project" value="MGI"/>
</dbReference>
<dbReference type="GO" id="GO:0043651">
    <property type="term" value="P:linoleic acid metabolic process"/>
    <property type="evidence" value="ECO:0000314"/>
    <property type="project" value="MGI"/>
</dbReference>
<dbReference type="CDD" id="cd20665">
    <property type="entry name" value="CYP2C-like"/>
    <property type="match status" value="1"/>
</dbReference>
<dbReference type="FunFam" id="1.10.630.10:FF:000299">
    <property type="entry name" value="Cytochrome P450 2C9"/>
    <property type="match status" value="1"/>
</dbReference>
<dbReference type="Gene3D" id="1.10.630.10">
    <property type="entry name" value="Cytochrome P450"/>
    <property type="match status" value="1"/>
</dbReference>
<dbReference type="InterPro" id="IPR001128">
    <property type="entry name" value="Cyt_P450"/>
</dbReference>
<dbReference type="InterPro" id="IPR017972">
    <property type="entry name" value="Cyt_P450_CS"/>
</dbReference>
<dbReference type="InterPro" id="IPR002401">
    <property type="entry name" value="Cyt_P450_E_grp-I"/>
</dbReference>
<dbReference type="InterPro" id="IPR036396">
    <property type="entry name" value="Cyt_P450_sf"/>
</dbReference>
<dbReference type="InterPro" id="IPR050182">
    <property type="entry name" value="Cytochrome_P450_fam2"/>
</dbReference>
<dbReference type="PANTHER" id="PTHR24300:SF384">
    <property type="entry name" value="CYTOCHROME P450 2C29-RELATED"/>
    <property type="match status" value="1"/>
</dbReference>
<dbReference type="PANTHER" id="PTHR24300">
    <property type="entry name" value="CYTOCHROME P450 508A4-RELATED"/>
    <property type="match status" value="1"/>
</dbReference>
<dbReference type="Pfam" id="PF00067">
    <property type="entry name" value="p450"/>
    <property type="match status" value="1"/>
</dbReference>
<dbReference type="PRINTS" id="PR00463">
    <property type="entry name" value="EP450I"/>
</dbReference>
<dbReference type="PRINTS" id="PR00385">
    <property type="entry name" value="P450"/>
</dbReference>
<dbReference type="SUPFAM" id="SSF48264">
    <property type="entry name" value="Cytochrome P450"/>
    <property type="match status" value="1"/>
</dbReference>
<dbReference type="PROSITE" id="PS00086">
    <property type="entry name" value="CYTOCHROME_P450"/>
    <property type="match status" value="1"/>
</dbReference>
<organism>
    <name type="scientific">Mus musculus</name>
    <name type="common">Mouse</name>
    <dbReference type="NCBI Taxonomy" id="10090"/>
    <lineage>
        <taxon>Eukaryota</taxon>
        <taxon>Metazoa</taxon>
        <taxon>Chordata</taxon>
        <taxon>Craniata</taxon>
        <taxon>Vertebrata</taxon>
        <taxon>Euteleostomi</taxon>
        <taxon>Mammalia</taxon>
        <taxon>Eutheria</taxon>
        <taxon>Euarchontoglires</taxon>
        <taxon>Glires</taxon>
        <taxon>Rodentia</taxon>
        <taxon>Myomorpha</taxon>
        <taxon>Muroidea</taxon>
        <taxon>Muridae</taxon>
        <taxon>Murinae</taxon>
        <taxon>Mus</taxon>
        <taxon>Mus</taxon>
    </lineage>
</organism>
<comment type="function">
    <text evidence="6">Metabolizes arachidonic acid to several midchain and omega-terminal hydroxyeicosatetraenoic acids (HETE).</text>
</comment>
<comment type="catalytic activity">
    <reaction evidence="6">
        <text>an organic molecule + reduced [NADPH--hemoprotein reductase] + O2 = an alcohol + oxidized [NADPH--hemoprotein reductase] + H2O + H(+)</text>
        <dbReference type="Rhea" id="RHEA:17149"/>
        <dbReference type="Rhea" id="RHEA-COMP:11964"/>
        <dbReference type="Rhea" id="RHEA-COMP:11965"/>
        <dbReference type="ChEBI" id="CHEBI:15377"/>
        <dbReference type="ChEBI" id="CHEBI:15378"/>
        <dbReference type="ChEBI" id="CHEBI:15379"/>
        <dbReference type="ChEBI" id="CHEBI:30879"/>
        <dbReference type="ChEBI" id="CHEBI:57618"/>
        <dbReference type="ChEBI" id="CHEBI:58210"/>
        <dbReference type="ChEBI" id="CHEBI:142491"/>
        <dbReference type="EC" id="1.14.14.1"/>
    </reaction>
</comment>
<comment type="cofactor">
    <cofactor evidence="1">
        <name>heme</name>
        <dbReference type="ChEBI" id="CHEBI:30413"/>
    </cofactor>
</comment>
<comment type="subcellular location">
    <subcellularLocation>
        <location evidence="6">Endoplasmic reticulum membrane</location>
        <topology evidence="6">Peripheral membrane protein</topology>
    </subcellularLocation>
    <subcellularLocation>
        <location evidence="6">Microsome membrane</location>
        <topology evidence="6">Peripheral membrane protein</topology>
    </subcellularLocation>
</comment>
<comment type="alternative products">
    <event type="alternative splicing"/>
    <isoform>
        <id>Q91X77-1</id>
        <name evidence="6">1</name>
        <sequence type="displayed"/>
    </isoform>
    <isoform>
        <id>Q91X77-2</id>
        <name evidence="7">2</name>
        <sequence type="described" ref="VSP_052374"/>
    </isoform>
</comment>
<comment type="tissue specificity">
    <text evidence="6">Expressed in heart and liver.</text>
</comment>
<comment type="induction">
    <text evidence="9">P450 can be induced to high levels in liver and other tissues by various foreign compounds, including drugs, pesticides, and carcinogens.</text>
</comment>
<comment type="similarity">
    <text evidence="5">Belongs to the cytochrome P450 family.</text>
</comment>
<name>CY250_MOUSE</name>
<protein>
    <recommendedName>
        <fullName>Cytochrome P450 2C50</fullName>
        <ecNumber evidence="6">1.14.14.1</ecNumber>
    </recommendedName>
    <alternativeName>
        <fullName>CYPIIC50</fullName>
    </alternativeName>
</protein>
<keyword id="KW-0007">Acetylation</keyword>
<keyword id="KW-0025">Alternative splicing</keyword>
<keyword id="KW-0903">Direct protein sequencing</keyword>
<keyword id="KW-0256">Endoplasmic reticulum</keyword>
<keyword id="KW-0349">Heme</keyword>
<keyword id="KW-0408">Iron</keyword>
<keyword id="KW-0472">Membrane</keyword>
<keyword id="KW-0479">Metal-binding</keyword>
<keyword id="KW-0492">Microsome</keyword>
<keyword id="KW-0503">Monooxygenase</keyword>
<keyword id="KW-0560">Oxidoreductase</keyword>
<keyword id="KW-0597">Phosphoprotein</keyword>
<keyword id="KW-1185">Reference proteome</keyword>
<proteinExistence type="evidence at protein level"/>
<feature type="chain" id="PRO_0000282957" description="Cytochrome P450 2C50">
    <location>
        <begin position="1"/>
        <end position="490"/>
    </location>
</feature>
<feature type="binding site" description="axial binding residue" evidence="3">
    <location>
        <position position="435"/>
    </location>
    <ligand>
        <name>heme</name>
        <dbReference type="ChEBI" id="CHEBI:30413"/>
    </ligand>
    <ligandPart>
        <name>Fe</name>
        <dbReference type="ChEBI" id="CHEBI:18248"/>
    </ligandPart>
</feature>
<feature type="modified residue" description="Phosphoserine" evidence="2">
    <location>
        <position position="127"/>
    </location>
</feature>
<feature type="modified residue" description="N6-acetyllysine" evidence="4">
    <location>
        <position position="249"/>
    </location>
</feature>
<feature type="modified residue" description="N6-acetyllysine" evidence="4">
    <location>
        <position position="375"/>
    </location>
</feature>
<feature type="splice variant" id="VSP_052374" description="In isoform 2." evidence="8">
    <location>
        <begin position="215"/>
        <end position="273"/>
    </location>
</feature>
<feature type="sequence conflict" description="In Ref. 3; AAH51050/AAH11222." evidence="9" ref="3">
    <original>R</original>
    <variation>N</variation>
    <location>
        <position position="71"/>
    </location>
</feature>
<feature type="sequence conflict" description="In Ref. 3; AAH11222." evidence="9" ref="3">
    <original>N</original>
    <variation>D</variation>
    <location>
        <position position="275"/>
    </location>
</feature>
<feature type="sequence conflict" description="In Ref. 3; AAH51050/AAH11222." evidence="9" ref="3">
    <original>R</original>
    <variation>S</variation>
    <location>
        <position position="336"/>
    </location>
</feature>
<feature type="sequence conflict" description="In Ref. 3; AAH51050/AAH11222." evidence="9" ref="3">
    <original>H</original>
    <variation>R</variation>
    <location>
        <position position="344"/>
    </location>
</feature>
<feature type="sequence conflict" description="In Ref. 1; AAO52736." evidence="9" ref="1">
    <original>L</original>
    <variation>Q</variation>
    <location>
        <position position="458"/>
    </location>
</feature>
<accession>Q91X77</accession>
<accession>E9QPJ0</accession>
<accession>Q6XVG3</accession>
<accession>Q80X43</accession>
<gene>
    <name evidence="10" type="primary">Cyp2c50</name>
</gene>
<sequence length="490" mass="55765">MDPILVLVFTLSCLFLLSLWRQSSERGKLPPGPTPLPIIGNILQINVKDICQSFTNLSKVYGPVYTLYLGRKPTVVLHGYEAVKEALVDHGEEFAGRGRLPVFDKATNGMGIIFSKGNVWKNTRRFSLTTLRNLGMGKRSIEDRVQEEARCLVEELRKTNGSPCDPTFILGCAPCNVICSIIFQDRFDYKDRDFLNLMEKLNEITKIMSTPWLQVCNTFPVLLDYCPGSHNKVFKNYACIKNFLLEKIKEHEESLDVTIPRDFIDYFLINGGQENGNYPLKNRLEHLAITVTDLFSAGTETTSTTLRYALLLLLKYPHVTAKVQEEIEHVIGKHRRPCMQDRSHMPYTDAMIHEVQRFIDLVPNSLPHEVTCDIKFRNYFIPKGTNVITSLSSVLRDSKEFPNPEKFDPGHFLDENGKFKKSDYFMPFSTGKRICAGEGLARMELFLFLTSILQNFNLKPLVHPKDIDVTPMLIGLASVPPAFQLCFIPS</sequence>
<reference key="1">
    <citation type="journal article" date="2004" name="Mol. Pharmacol.">
        <title>Cloning, expression, and characterization of three new mouse cytochrome p450 enzymes and partial characterization of their fatty acid oxidation activities.</title>
        <authorList>
            <person name="Wang H."/>
            <person name="Zhao Y."/>
            <person name="Bradbury J.A."/>
            <person name="Graves J.P."/>
            <person name="Foley J."/>
            <person name="Blaisdell J.A."/>
            <person name="Goldstein J.A."/>
            <person name="Zeldin D.C."/>
        </authorList>
    </citation>
    <scope>NUCLEOTIDE SEQUENCE [MRNA]</scope>
    <scope>FUNCTION</scope>
    <scope>CATALYTIC ACTIVITY</scope>
    <scope>SUBCELLULAR LOCATION</scope>
    <scope>TISSUE SPECIFICITY (ISOFORM 1)</scope>
    <source>
        <strain evidence="12">C57BL/6J</strain>
        <tissue evidence="6">Heart</tissue>
    </source>
</reference>
<reference key="2">
    <citation type="journal article" date="2009" name="PLoS Biol.">
        <title>Lineage-specific biology revealed by a finished genome assembly of the mouse.</title>
        <authorList>
            <person name="Church D.M."/>
            <person name="Goodstadt L."/>
            <person name="Hillier L.W."/>
            <person name="Zody M.C."/>
            <person name="Goldstein S."/>
            <person name="She X."/>
            <person name="Bult C.J."/>
            <person name="Agarwala R."/>
            <person name="Cherry J.L."/>
            <person name="DiCuccio M."/>
            <person name="Hlavina W."/>
            <person name="Kapustin Y."/>
            <person name="Meric P."/>
            <person name="Maglott D."/>
            <person name="Birtle Z."/>
            <person name="Marques A.C."/>
            <person name="Graves T."/>
            <person name="Zhou S."/>
            <person name="Teague B."/>
            <person name="Potamousis K."/>
            <person name="Churas C."/>
            <person name="Place M."/>
            <person name="Herschleb J."/>
            <person name="Runnheim R."/>
            <person name="Forrest D."/>
            <person name="Amos-Landgraf J."/>
            <person name="Schwartz D.C."/>
            <person name="Cheng Z."/>
            <person name="Lindblad-Toh K."/>
            <person name="Eichler E.E."/>
            <person name="Ponting C.P."/>
        </authorList>
    </citation>
    <scope>NUCLEOTIDE SEQUENCE [LARGE SCALE GENOMIC DNA]</scope>
    <source>
        <strain>C57BL/6J</strain>
    </source>
</reference>
<reference evidence="9 11" key="3">
    <citation type="journal article" date="2004" name="Genome Res.">
        <title>The status, quality, and expansion of the NIH full-length cDNA project: the Mammalian Gene Collection (MGC).</title>
        <authorList>
            <consortium name="The MGC Project Team"/>
        </authorList>
    </citation>
    <scope>NUCLEOTIDE SEQUENCE [LARGE SCALE MRNA] (ISOFORMS 1 AND 2)</scope>
    <source>
        <strain evidence="11">FVB/N</strain>
        <tissue evidence="11">Liver</tissue>
    </source>
</reference>
<reference key="4">
    <citation type="submission" date="2009-01" db="UniProtKB">
        <authorList>
            <person name="Lubec G."/>
            <person name="Sunyer B."/>
            <person name="Chen W.-Q."/>
        </authorList>
    </citation>
    <scope>PROTEIN SEQUENCE OF 100-116</scope>
    <scope>IDENTIFICATION BY MASS SPECTROMETRY</scope>
    <source>
        <strain>OF1</strain>
        <tissue>Hippocampus</tissue>
    </source>
</reference>
<reference key="5">
    <citation type="journal article" date="2010" name="Cell">
        <title>A tissue-specific atlas of mouse protein phosphorylation and expression.</title>
        <authorList>
            <person name="Huttlin E.L."/>
            <person name="Jedrychowski M.P."/>
            <person name="Elias J.E."/>
            <person name="Goswami T."/>
            <person name="Rad R."/>
            <person name="Beausoleil S.A."/>
            <person name="Villen J."/>
            <person name="Haas W."/>
            <person name="Sowa M.E."/>
            <person name="Gygi S.P."/>
        </authorList>
    </citation>
    <scope>IDENTIFICATION BY MASS SPECTROMETRY [LARGE SCALE ANALYSIS]</scope>
    <source>
        <tissue>Liver</tissue>
    </source>
</reference>
<evidence type="ECO:0000250" key="1"/>
<evidence type="ECO:0000250" key="2">
    <source>
        <dbReference type="UniProtKB" id="P00176"/>
    </source>
</evidence>
<evidence type="ECO:0000250" key="3">
    <source>
        <dbReference type="UniProtKB" id="P10632"/>
    </source>
</evidence>
<evidence type="ECO:0000250" key="4">
    <source>
        <dbReference type="UniProtKB" id="Q64458"/>
    </source>
</evidence>
<evidence type="ECO:0000255" key="5"/>
<evidence type="ECO:0000269" key="6">
    <source>
    </source>
</evidence>
<evidence type="ECO:0000269" key="7">
    <source>
    </source>
</evidence>
<evidence type="ECO:0000303" key="8">
    <source>
    </source>
</evidence>
<evidence type="ECO:0000305" key="9"/>
<evidence type="ECO:0000312" key="10">
    <source>
        <dbReference type="EMBL" id="AAH11222.1"/>
    </source>
</evidence>
<evidence type="ECO:0000312" key="11">
    <source>
        <dbReference type="EMBL" id="AAH51050.1"/>
    </source>
</evidence>
<evidence type="ECO:0000312" key="12">
    <source>
        <dbReference type="EMBL" id="AAO52736.1"/>
    </source>
</evidence>